<name>DNAK_RICFE</name>
<sequence>MGKVIGIDLGTTNSCVAVMEGKEPKVIDNAEGERTTPSIIAFANSERLVGQPAKRQAVTNPRNTIYAVKRLIGRNFTDPMVRKDQGLVPYNIVKADNGDAWVEADNNKYSPSQISAFILQKMKETAENYLGEKVTQAVITVPAYFNDAQRQATKDAGKIAGLEVLRIINEPTAAALAYGFEKSSSKTIAVYDLGGGTFDVSILEISDGVFEVKSTNGDTFLGGEDFDTRILNHLIDVFKKDSGIDLSKDPLALQRLKEAAEKAKKELSSTSATDINLPYITADSTGPKHLNIKFTRAELEKLVDDLIEKTIEPCRQALKDAGFKPTDIQEVVLVGGMTRMPKVQEAVKKFFGREPHKGVNPDEVVALGAAIQGGVLNKEVTDILLLDVTPLSLGIETLGGVFTRLIDRNTTIPSKKSQVFSTADDNQHAVTIRVFQGEREMAKDNKLLGQFNLEGIPPAPRGVPQIEVTFDIDANGIVHVSAKDKASGKEQKVTIQASGGLSDSEIEQMVKDAEHNADEDKKRKELIETKNAADSLVYSTEKTLREYGDKLSSEEKGAVEEALASLKSALESEDASLIKEKTNNLTAANMKIGETMYKAQTENQHSEANTVNDEKVVDADFQDVDKK</sequence>
<dbReference type="EMBL" id="CP000053">
    <property type="protein sequence ID" value="AAY61935.1"/>
    <property type="molecule type" value="Genomic_DNA"/>
</dbReference>
<dbReference type="SMR" id="Q4UJK7"/>
<dbReference type="STRING" id="315456.RF_1084"/>
<dbReference type="KEGG" id="rfe:RF_1084"/>
<dbReference type="eggNOG" id="COG0443">
    <property type="taxonomic scope" value="Bacteria"/>
</dbReference>
<dbReference type="HOGENOM" id="CLU_005965_2_4_5"/>
<dbReference type="Proteomes" id="UP000008548">
    <property type="component" value="Chromosome"/>
</dbReference>
<dbReference type="GO" id="GO:0005524">
    <property type="term" value="F:ATP binding"/>
    <property type="evidence" value="ECO:0007669"/>
    <property type="project" value="UniProtKB-UniRule"/>
</dbReference>
<dbReference type="GO" id="GO:0140662">
    <property type="term" value="F:ATP-dependent protein folding chaperone"/>
    <property type="evidence" value="ECO:0007669"/>
    <property type="project" value="InterPro"/>
</dbReference>
<dbReference type="GO" id="GO:0051082">
    <property type="term" value="F:unfolded protein binding"/>
    <property type="evidence" value="ECO:0007669"/>
    <property type="project" value="InterPro"/>
</dbReference>
<dbReference type="CDD" id="cd11733">
    <property type="entry name" value="ASKHA_NBD_HSP70_HSPA9"/>
    <property type="match status" value="1"/>
</dbReference>
<dbReference type="FunFam" id="2.60.34.10:FF:000014">
    <property type="entry name" value="Chaperone protein DnaK HSP70"/>
    <property type="match status" value="1"/>
</dbReference>
<dbReference type="FunFam" id="3.30.420.40:FF:000020">
    <property type="entry name" value="Chaperone protein HscA homolog"/>
    <property type="match status" value="1"/>
</dbReference>
<dbReference type="FunFam" id="3.30.30.30:FF:000003">
    <property type="entry name" value="Heat shock protein 9"/>
    <property type="match status" value="1"/>
</dbReference>
<dbReference type="FunFam" id="1.20.1270.10:FF:000001">
    <property type="entry name" value="Molecular chaperone DnaK"/>
    <property type="match status" value="1"/>
</dbReference>
<dbReference type="FunFam" id="3.30.420.40:FF:000004">
    <property type="entry name" value="Molecular chaperone DnaK"/>
    <property type="match status" value="1"/>
</dbReference>
<dbReference type="FunFam" id="3.90.640.10:FF:000003">
    <property type="entry name" value="Molecular chaperone DnaK"/>
    <property type="match status" value="1"/>
</dbReference>
<dbReference type="Gene3D" id="1.20.1270.10">
    <property type="match status" value="1"/>
</dbReference>
<dbReference type="Gene3D" id="3.30.420.40">
    <property type="match status" value="2"/>
</dbReference>
<dbReference type="Gene3D" id="3.90.640.10">
    <property type="entry name" value="Actin, Chain A, domain 4"/>
    <property type="match status" value="1"/>
</dbReference>
<dbReference type="Gene3D" id="2.60.34.10">
    <property type="entry name" value="Substrate Binding Domain Of DNAk, Chain A, domain 1"/>
    <property type="match status" value="1"/>
</dbReference>
<dbReference type="HAMAP" id="MF_00332">
    <property type="entry name" value="DnaK"/>
    <property type="match status" value="1"/>
</dbReference>
<dbReference type="InterPro" id="IPR043129">
    <property type="entry name" value="ATPase_NBD"/>
</dbReference>
<dbReference type="InterPro" id="IPR012725">
    <property type="entry name" value="Chaperone_DnaK"/>
</dbReference>
<dbReference type="InterPro" id="IPR018181">
    <property type="entry name" value="Heat_shock_70_CS"/>
</dbReference>
<dbReference type="InterPro" id="IPR029048">
    <property type="entry name" value="HSP70_C_sf"/>
</dbReference>
<dbReference type="InterPro" id="IPR029047">
    <property type="entry name" value="HSP70_peptide-bd_sf"/>
</dbReference>
<dbReference type="InterPro" id="IPR013126">
    <property type="entry name" value="Hsp_70_fam"/>
</dbReference>
<dbReference type="NCBIfam" id="NF001413">
    <property type="entry name" value="PRK00290.1"/>
    <property type="match status" value="1"/>
</dbReference>
<dbReference type="NCBIfam" id="NF003520">
    <property type="entry name" value="PRK05183.1"/>
    <property type="match status" value="1"/>
</dbReference>
<dbReference type="NCBIfam" id="TIGR02350">
    <property type="entry name" value="prok_dnaK"/>
    <property type="match status" value="1"/>
</dbReference>
<dbReference type="PANTHER" id="PTHR19375">
    <property type="entry name" value="HEAT SHOCK PROTEIN 70KDA"/>
    <property type="match status" value="1"/>
</dbReference>
<dbReference type="Pfam" id="PF00012">
    <property type="entry name" value="HSP70"/>
    <property type="match status" value="1"/>
</dbReference>
<dbReference type="PRINTS" id="PR00301">
    <property type="entry name" value="HEATSHOCK70"/>
</dbReference>
<dbReference type="SUPFAM" id="SSF53067">
    <property type="entry name" value="Actin-like ATPase domain"/>
    <property type="match status" value="2"/>
</dbReference>
<dbReference type="SUPFAM" id="SSF100934">
    <property type="entry name" value="Heat shock protein 70kD (HSP70), C-terminal subdomain"/>
    <property type="match status" value="1"/>
</dbReference>
<dbReference type="SUPFAM" id="SSF100920">
    <property type="entry name" value="Heat shock protein 70kD (HSP70), peptide-binding domain"/>
    <property type="match status" value="1"/>
</dbReference>
<dbReference type="PROSITE" id="PS00297">
    <property type="entry name" value="HSP70_1"/>
    <property type="match status" value="1"/>
</dbReference>
<dbReference type="PROSITE" id="PS00329">
    <property type="entry name" value="HSP70_2"/>
    <property type="match status" value="1"/>
</dbReference>
<dbReference type="PROSITE" id="PS01036">
    <property type="entry name" value="HSP70_3"/>
    <property type="match status" value="1"/>
</dbReference>
<accession>Q4UJK7</accession>
<protein>
    <recommendedName>
        <fullName evidence="1">Chaperone protein DnaK</fullName>
    </recommendedName>
    <alternativeName>
        <fullName evidence="1">HSP70</fullName>
    </alternativeName>
    <alternativeName>
        <fullName evidence="1">Heat shock 70 kDa protein</fullName>
    </alternativeName>
    <alternativeName>
        <fullName evidence="1">Heat shock protein 70</fullName>
    </alternativeName>
</protein>
<comment type="function">
    <text evidence="1">Acts as a chaperone.</text>
</comment>
<comment type="induction">
    <text evidence="1">By stress conditions e.g. heat shock.</text>
</comment>
<comment type="similarity">
    <text evidence="1">Belongs to the heat shock protein 70 family.</text>
</comment>
<keyword id="KW-0067">ATP-binding</keyword>
<keyword id="KW-0143">Chaperone</keyword>
<keyword id="KW-0547">Nucleotide-binding</keyword>
<keyword id="KW-0597">Phosphoprotein</keyword>
<keyword id="KW-0346">Stress response</keyword>
<gene>
    <name evidence="1" type="primary">dnaK</name>
    <name type="ordered locus">RF_1084</name>
</gene>
<proteinExistence type="inferred from homology"/>
<reference key="1">
    <citation type="journal article" date="2005" name="PLoS Biol.">
        <title>The genome sequence of Rickettsia felis identifies the first putative conjugative plasmid in an obligate intracellular parasite.</title>
        <authorList>
            <person name="Ogata H."/>
            <person name="Renesto P."/>
            <person name="Audic S."/>
            <person name="Robert C."/>
            <person name="Blanc G."/>
            <person name="Fournier P.-E."/>
            <person name="Parinello H."/>
            <person name="Claverie J.-M."/>
            <person name="Raoult D."/>
        </authorList>
    </citation>
    <scope>NUCLEOTIDE SEQUENCE [LARGE SCALE GENOMIC DNA]</scope>
    <source>
        <strain>ATCC VR-1525 / URRWXCal2</strain>
    </source>
</reference>
<feature type="chain" id="PRO_0000226004" description="Chaperone protein DnaK">
    <location>
        <begin position="1"/>
        <end position="627"/>
    </location>
</feature>
<feature type="region of interest" description="Disordered" evidence="2">
    <location>
        <begin position="602"/>
        <end position="627"/>
    </location>
</feature>
<feature type="compositionally biased region" description="Polar residues" evidence="2">
    <location>
        <begin position="602"/>
        <end position="611"/>
    </location>
</feature>
<feature type="compositionally biased region" description="Basic and acidic residues" evidence="2">
    <location>
        <begin position="612"/>
        <end position="627"/>
    </location>
</feature>
<feature type="modified residue" description="Phosphothreonine; by autocatalysis" evidence="1">
    <location>
        <position position="197"/>
    </location>
</feature>
<evidence type="ECO:0000255" key="1">
    <source>
        <dbReference type="HAMAP-Rule" id="MF_00332"/>
    </source>
</evidence>
<evidence type="ECO:0000256" key="2">
    <source>
        <dbReference type="SAM" id="MobiDB-lite"/>
    </source>
</evidence>
<organism>
    <name type="scientific">Rickettsia felis (strain ATCC VR-1525 / URRWXCal2)</name>
    <name type="common">Rickettsia azadi</name>
    <dbReference type="NCBI Taxonomy" id="315456"/>
    <lineage>
        <taxon>Bacteria</taxon>
        <taxon>Pseudomonadati</taxon>
        <taxon>Pseudomonadota</taxon>
        <taxon>Alphaproteobacteria</taxon>
        <taxon>Rickettsiales</taxon>
        <taxon>Rickettsiaceae</taxon>
        <taxon>Rickettsieae</taxon>
        <taxon>Rickettsia</taxon>
        <taxon>spotted fever group</taxon>
    </lineage>
</organism>